<proteinExistence type="evidence at protein level"/>
<protein>
    <recommendedName>
        <fullName evidence="1">Signal recognition particle 19 kDa protein</fullName>
        <shortName evidence="1">SRP19</shortName>
    </recommendedName>
</protein>
<organism>
    <name type="scientific">Haloferax volcanii (strain ATCC 29605 / DSM 3757 / JCM 8879 / NBRC 14742 / NCIMB 2012 / VKM B-1768 / DS2)</name>
    <name type="common">Halobacterium volcanii</name>
    <dbReference type="NCBI Taxonomy" id="309800"/>
    <lineage>
        <taxon>Archaea</taxon>
        <taxon>Methanobacteriati</taxon>
        <taxon>Methanobacteriota</taxon>
        <taxon>Stenosarchaea group</taxon>
        <taxon>Halobacteria</taxon>
        <taxon>Halobacteriales</taxon>
        <taxon>Haloferacaceae</taxon>
        <taxon>Haloferax</taxon>
    </lineage>
</organism>
<dbReference type="EMBL" id="CP001956">
    <property type="protein sequence ID" value="ADE05093.1"/>
    <property type="molecule type" value="Genomic_DNA"/>
</dbReference>
<dbReference type="EMBL" id="AOHU01000091">
    <property type="protein sequence ID" value="ELY28201.1"/>
    <property type="molecule type" value="Genomic_DNA"/>
</dbReference>
<dbReference type="RefSeq" id="WP_004043828.1">
    <property type="nucleotide sequence ID" value="NC_013967.1"/>
</dbReference>
<dbReference type="SMR" id="D4GW40"/>
<dbReference type="STRING" id="309800.HVO_1109"/>
<dbReference type="PaxDb" id="309800-C498_13198"/>
<dbReference type="EnsemblBacteria" id="ADE05093">
    <property type="protein sequence ID" value="ADE05093"/>
    <property type="gene ID" value="HVO_1109"/>
</dbReference>
<dbReference type="GeneID" id="8924340"/>
<dbReference type="KEGG" id="hvo:HVO_1109"/>
<dbReference type="PATRIC" id="fig|309800.29.peg.2534"/>
<dbReference type="eggNOG" id="arCOG01217">
    <property type="taxonomic scope" value="Archaea"/>
</dbReference>
<dbReference type="HOGENOM" id="CLU_169299_1_0_2"/>
<dbReference type="OrthoDB" id="56356at2157"/>
<dbReference type="Proteomes" id="UP000008243">
    <property type="component" value="Chromosome"/>
</dbReference>
<dbReference type="Proteomes" id="UP000011532">
    <property type="component" value="Unassembled WGS sequence"/>
</dbReference>
<dbReference type="GO" id="GO:0048500">
    <property type="term" value="C:signal recognition particle"/>
    <property type="evidence" value="ECO:0007669"/>
    <property type="project" value="UniProtKB-UniRule"/>
</dbReference>
<dbReference type="GO" id="GO:0008312">
    <property type="term" value="F:7S RNA binding"/>
    <property type="evidence" value="ECO:0007669"/>
    <property type="project" value="UniProtKB-UniRule"/>
</dbReference>
<dbReference type="GO" id="GO:0006617">
    <property type="term" value="P:SRP-dependent cotranslational protein targeting to membrane, signal sequence recognition"/>
    <property type="evidence" value="ECO:0007669"/>
    <property type="project" value="TreeGrafter"/>
</dbReference>
<dbReference type="Gene3D" id="3.30.56.30">
    <property type="entry name" value="Signal recognition particle, SRP19-like subunit"/>
    <property type="match status" value="1"/>
</dbReference>
<dbReference type="HAMAP" id="MF_00305">
    <property type="entry name" value="SRP19"/>
    <property type="match status" value="1"/>
</dbReference>
<dbReference type="InterPro" id="IPR002778">
    <property type="entry name" value="Signal_recog_particle_SRP19"/>
</dbReference>
<dbReference type="InterPro" id="IPR053394">
    <property type="entry name" value="SRP19"/>
</dbReference>
<dbReference type="InterPro" id="IPR036521">
    <property type="entry name" value="SRP19-like_sf"/>
</dbReference>
<dbReference type="InterPro" id="IPR022938">
    <property type="entry name" value="SRP19_arc-type"/>
</dbReference>
<dbReference type="NCBIfam" id="NF041311">
    <property type="entry name" value="Sig_rec_Srp19_Halo"/>
    <property type="match status" value="1"/>
</dbReference>
<dbReference type="PANTHER" id="PTHR17453">
    <property type="entry name" value="SIGNAL RECOGNITION PARTICLE 19 KD PROTEIN"/>
    <property type="match status" value="1"/>
</dbReference>
<dbReference type="PANTHER" id="PTHR17453:SF0">
    <property type="entry name" value="SIGNAL RECOGNITION PARTICLE 19 KDA PROTEIN"/>
    <property type="match status" value="1"/>
</dbReference>
<dbReference type="Pfam" id="PF01922">
    <property type="entry name" value="SRP19"/>
    <property type="match status" value="1"/>
</dbReference>
<dbReference type="SUPFAM" id="SSF69695">
    <property type="entry name" value="SRP19"/>
    <property type="match status" value="1"/>
</dbReference>
<gene>
    <name evidence="1" type="primary">srp19</name>
    <name type="ordered locus">HVO_1109</name>
    <name type="ORF">C498_13198</name>
</gene>
<accession>D4GW40</accession>
<sequence>MVENVIYPAYLDASLSRSEGRRVAQSAAVEAPTVDEIAKAVQQVGYDAVIERDKRYSREFETRGRVLVNNADDATKNDIVQAVAAYVGILRD</sequence>
<name>SRP19_HALVD</name>
<comment type="function">
    <text evidence="1">Involved in targeting and insertion of nascent membrane proteins into the cytoplasmic membrane. Binds directly to 7S RNA and mediates binding of the 54 kDa subunit of the SRP.</text>
</comment>
<comment type="subunit">
    <text evidence="1 2">Part of the signal recognition particle protein translocation system, which is composed of SRP and FtsY. Archaeal SRP consists of a 7S RNA molecule of 300 nucleotides and two protein subunits: SRP54 and SRP19.</text>
</comment>
<comment type="subcellular location">
    <subcellularLocation>
        <location evidence="1 3">Cytoplasm</location>
    </subcellularLocation>
</comment>
<comment type="disruption phenotype">
    <text evidence="4">No effect on cell growth, membrane protein insertion, protein secretion, or ribosome levels.</text>
</comment>
<comment type="similarity">
    <text evidence="1">Belongs to the SRP19 family.</text>
</comment>
<evidence type="ECO:0000255" key="1">
    <source>
        <dbReference type="HAMAP-Rule" id="MF_00305"/>
    </source>
</evidence>
<evidence type="ECO:0000269" key="2">
    <source>
    </source>
</evidence>
<evidence type="ECO:0000269" key="3">
    <source>
    </source>
</evidence>
<evidence type="ECO:0000269" key="4">
    <source>
    </source>
</evidence>
<keyword id="KW-0963">Cytoplasm</keyword>
<keyword id="KW-1185">Reference proteome</keyword>
<keyword id="KW-0687">Ribonucleoprotein</keyword>
<keyword id="KW-0694">RNA-binding</keyword>
<keyword id="KW-0733">Signal recognition particle</keyword>
<feature type="chain" id="PRO_0000428993" description="Signal recognition particle 19 kDa protein">
    <location>
        <begin position="1"/>
        <end position="92"/>
    </location>
</feature>
<reference key="1">
    <citation type="journal article" date="2010" name="PLoS ONE">
        <title>The complete genome sequence of Haloferax volcanii DS2, a model archaeon.</title>
        <authorList>
            <person name="Hartman A.L."/>
            <person name="Norais C."/>
            <person name="Badger J.H."/>
            <person name="Delmas S."/>
            <person name="Haldenby S."/>
            <person name="Madupu R."/>
            <person name="Robinson J."/>
            <person name="Khouri H."/>
            <person name="Ren Q."/>
            <person name="Lowe T.M."/>
            <person name="Maupin-Furlow J."/>
            <person name="Pohlschroder M."/>
            <person name="Daniels C."/>
            <person name="Pfeiffer F."/>
            <person name="Allers T."/>
            <person name="Eisen J.A."/>
        </authorList>
    </citation>
    <scope>NUCLEOTIDE SEQUENCE [LARGE SCALE GENOMIC DNA]</scope>
    <source>
        <strain>ATCC 29605 / DSM 3757 / JCM 8879 / NBRC 14742 / NCIMB 2012 / VKM B-1768 / DS2</strain>
    </source>
</reference>
<reference key="2">
    <citation type="journal article" date="2014" name="PLoS Genet.">
        <title>Phylogenetically driven sequencing of extremely halophilic archaea reveals strategies for static and dynamic osmo-response.</title>
        <authorList>
            <person name="Becker E.A."/>
            <person name="Seitzer P.M."/>
            <person name="Tritt A."/>
            <person name="Larsen D."/>
            <person name="Krusor M."/>
            <person name="Yao A.I."/>
            <person name="Wu D."/>
            <person name="Madern D."/>
            <person name="Eisen J.A."/>
            <person name="Darling A.E."/>
            <person name="Facciotti M.T."/>
        </authorList>
    </citation>
    <scope>NUCLEOTIDE SEQUENCE [LARGE SCALE GENOMIC DNA]</scope>
    <source>
        <strain>ATCC 29605 / DSM 3757 / JCM 8879 / NBRC 14742 / NCIMB 2012 / VKM B-1768 / DS2</strain>
    </source>
</reference>
<reference key="3">
    <citation type="journal article" date="2002" name="J. Bacteriol.">
        <title>In vivo analysis of an essential archaeal signal recognition particle in its native host.</title>
        <authorList>
            <person name="Rose R.W."/>
            <person name="Pohlschroder M."/>
        </authorList>
    </citation>
    <scope>SUBUNIT</scope>
    <source>
        <strain>DS2 / DSM 5716 / WFD11</strain>
    </source>
</reference>
<reference key="4">
    <citation type="journal article" date="2002" name="Nucleic Acids Res.">
        <title>Reconstitution of the signal recognition particle of the halophilic archaeon Haloferax volcanii.</title>
        <authorList>
            <person name="Tozik I."/>
            <person name="Huang Q."/>
            <person name="Zwieb C."/>
            <person name="Eichler J."/>
        </authorList>
    </citation>
    <scope>INTERACTION WITH SRP54 AND 7S RNA</scope>
    <scope>SUBCELLULAR LOCATION</scope>
    <source>
        <strain>ATCC 29605 / DSM 3757 / JCM 8879 / NBRC 14742 / NCIMB 2012 / VKM B-1768 / DS2</strain>
    </source>
</reference>
<reference key="5">
    <citation type="journal article" date="2007" name="J. Bacteriol.">
        <title>SRP19 is a dispensable component of the signal recognition particle in Archaea.</title>
        <authorList>
            <person name="Yurist S."/>
            <person name="Dahan I."/>
            <person name="Eichler J."/>
        </authorList>
    </citation>
    <scope>DISRUPTION PHENOTYPE</scope>
    <source>
        <strain>DS2 / WR 536 / H53</strain>
    </source>
</reference>